<evidence type="ECO:0000255" key="1">
    <source>
        <dbReference type="HAMAP-Rule" id="MF_01224"/>
    </source>
</evidence>
<proteinExistence type="inferred from homology"/>
<name>MOAC_ECO55</name>
<feature type="chain" id="PRO_1000164889" description="Cyclic pyranopterin monophosphate synthase">
    <location>
        <begin position="1"/>
        <end position="161"/>
    </location>
</feature>
<feature type="active site" evidence="1">
    <location>
        <position position="128"/>
    </location>
</feature>
<feature type="binding site" evidence="1">
    <location>
        <begin position="75"/>
        <end position="77"/>
    </location>
    <ligand>
        <name>substrate</name>
    </ligand>
</feature>
<feature type="binding site" evidence="1">
    <location>
        <begin position="113"/>
        <end position="114"/>
    </location>
    <ligand>
        <name>substrate</name>
    </ligand>
</feature>
<gene>
    <name evidence="1" type="primary">moaC</name>
    <name type="ordered locus">EC55989_0826</name>
</gene>
<sequence>MSQLTHINAAGEAHMVDVSAKAETVREARAEAFVTMRSETLAMIIDGRHHKGDVFATARIAGIQAAKRTWDLIPLCHPLMLSKVEVNLQAEPEHNRVRIETLCRLTGKTGVEMEALTAASVAALTIYDMCKAVQKDMVIGPVRLLAKSGGKSGDFKVEADD</sequence>
<reference key="1">
    <citation type="journal article" date="2009" name="PLoS Genet.">
        <title>Organised genome dynamics in the Escherichia coli species results in highly diverse adaptive paths.</title>
        <authorList>
            <person name="Touchon M."/>
            <person name="Hoede C."/>
            <person name="Tenaillon O."/>
            <person name="Barbe V."/>
            <person name="Baeriswyl S."/>
            <person name="Bidet P."/>
            <person name="Bingen E."/>
            <person name="Bonacorsi S."/>
            <person name="Bouchier C."/>
            <person name="Bouvet O."/>
            <person name="Calteau A."/>
            <person name="Chiapello H."/>
            <person name="Clermont O."/>
            <person name="Cruveiller S."/>
            <person name="Danchin A."/>
            <person name="Diard M."/>
            <person name="Dossat C."/>
            <person name="Karoui M.E."/>
            <person name="Frapy E."/>
            <person name="Garry L."/>
            <person name="Ghigo J.M."/>
            <person name="Gilles A.M."/>
            <person name="Johnson J."/>
            <person name="Le Bouguenec C."/>
            <person name="Lescat M."/>
            <person name="Mangenot S."/>
            <person name="Martinez-Jehanne V."/>
            <person name="Matic I."/>
            <person name="Nassif X."/>
            <person name="Oztas S."/>
            <person name="Petit M.A."/>
            <person name="Pichon C."/>
            <person name="Rouy Z."/>
            <person name="Ruf C.S."/>
            <person name="Schneider D."/>
            <person name="Tourret J."/>
            <person name="Vacherie B."/>
            <person name="Vallenet D."/>
            <person name="Medigue C."/>
            <person name="Rocha E.P.C."/>
            <person name="Denamur E."/>
        </authorList>
    </citation>
    <scope>NUCLEOTIDE SEQUENCE [LARGE SCALE GENOMIC DNA]</scope>
    <source>
        <strain>55989 / EAEC</strain>
    </source>
</reference>
<accession>B7LC65</accession>
<comment type="function">
    <text evidence="1">Catalyzes the conversion of (8S)-3',8-cyclo-7,8-dihydroguanosine 5'-triphosphate to cyclic pyranopterin monophosphate (cPMP).</text>
</comment>
<comment type="catalytic activity">
    <reaction evidence="1">
        <text>(8S)-3',8-cyclo-7,8-dihydroguanosine 5'-triphosphate = cyclic pyranopterin phosphate + diphosphate</text>
        <dbReference type="Rhea" id="RHEA:49580"/>
        <dbReference type="ChEBI" id="CHEBI:33019"/>
        <dbReference type="ChEBI" id="CHEBI:59648"/>
        <dbReference type="ChEBI" id="CHEBI:131766"/>
        <dbReference type="EC" id="4.6.1.17"/>
    </reaction>
</comment>
<comment type="pathway">
    <text evidence="1">Cofactor biosynthesis; molybdopterin biosynthesis.</text>
</comment>
<comment type="subunit">
    <text evidence="1">Homohexamer; trimer of dimers.</text>
</comment>
<comment type="similarity">
    <text evidence="1">Belongs to the MoaC family.</text>
</comment>
<organism>
    <name type="scientific">Escherichia coli (strain 55989 / EAEC)</name>
    <dbReference type="NCBI Taxonomy" id="585055"/>
    <lineage>
        <taxon>Bacteria</taxon>
        <taxon>Pseudomonadati</taxon>
        <taxon>Pseudomonadota</taxon>
        <taxon>Gammaproteobacteria</taxon>
        <taxon>Enterobacterales</taxon>
        <taxon>Enterobacteriaceae</taxon>
        <taxon>Escherichia</taxon>
    </lineage>
</organism>
<dbReference type="EC" id="4.6.1.17" evidence="1"/>
<dbReference type="EMBL" id="CU928145">
    <property type="protein sequence ID" value="CAU96692.1"/>
    <property type="molecule type" value="Genomic_DNA"/>
</dbReference>
<dbReference type="RefSeq" id="WP_000080885.1">
    <property type="nucleotide sequence ID" value="NZ_CP028304.1"/>
</dbReference>
<dbReference type="SMR" id="B7LC65"/>
<dbReference type="GeneID" id="86945666"/>
<dbReference type="KEGG" id="eck:EC55989_0826"/>
<dbReference type="HOGENOM" id="CLU_074693_1_1_6"/>
<dbReference type="UniPathway" id="UPA00344"/>
<dbReference type="Proteomes" id="UP000000746">
    <property type="component" value="Chromosome"/>
</dbReference>
<dbReference type="GO" id="GO:0061799">
    <property type="term" value="F:cyclic pyranopterin monophosphate synthase activity"/>
    <property type="evidence" value="ECO:0007669"/>
    <property type="project" value="UniProtKB-UniRule"/>
</dbReference>
<dbReference type="GO" id="GO:0006777">
    <property type="term" value="P:Mo-molybdopterin cofactor biosynthetic process"/>
    <property type="evidence" value="ECO:0007669"/>
    <property type="project" value="UniProtKB-UniRule"/>
</dbReference>
<dbReference type="CDD" id="cd01420">
    <property type="entry name" value="MoaC_PE"/>
    <property type="match status" value="1"/>
</dbReference>
<dbReference type="FunFam" id="3.30.70.640:FF:000001">
    <property type="entry name" value="Cyclic pyranopterin monophosphate synthase"/>
    <property type="match status" value="1"/>
</dbReference>
<dbReference type="Gene3D" id="3.30.70.640">
    <property type="entry name" value="Molybdopterin cofactor biosynthesis C (MoaC) domain"/>
    <property type="match status" value="1"/>
</dbReference>
<dbReference type="HAMAP" id="MF_01224_B">
    <property type="entry name" value="MoaC_B"/>
    <property type="match status" value="1"/>
</dbReference>
<dbReference type="InterPro" id="IPR023045">
    <property type="entry name" value="MoaC"/>
</dbReference>
<dbReference type="InterPro" id="IPR047594">
    <property type="entry name" value="MoaC_bact/euk"/>
</dbReference>
<dbReference type="InterPro" id="IPR036522">
    <property type="entry name" value="MoaC_sf"/>
</dbReference>
<dbReference type="InterPro" id="IPR050105">
    <property type="entry name" value="MoCo_biosynth_MoaA/MoaC"/>
</dbReference>
<dbReference type="InterPro" id="IPR002820">
    <property type="entry name" value="Mopterin_CF_biosynth-C_dom"/>
</dbReference>
<dbReference type="NCBIfam" id="TIGR00581">
    <property type="entry name" value="moaC"/>
    <property type="match status" value="1"/>
</dbReference>
<dbReference type="NCBIfam" id="NF006870">
    <property type="entry name" value="PRK09364.1"/>
    <property type="match status" value="1"/>
</dbReference>
<dbReference type="PANTHER" id="PTHR22960">
    <property type="entry name" value="MOLYBDOPTERIN COFACTOR SYNTHESIS PROTEIN A"/>
    <property type="match status" value="1"/>
</dbReference>
<dbReference type="Pfam" id="PF01967">
    <property type="entry name" value="MoaC"/>
    <property type="match status" value="1"/>
</dbReference>
<dbReference type="SUPFAM" id="SSF55040">
    <property type="entry name" value="Molybdenum cofactor biosynthesis protein C, MoaC"/>
    <property type="match status" value="1"/>
</dbReference>
<keyword id="KW-0456">Lyase</keyword>
<keyword id="KW-0501">Molybdenum cofactor biosynthesis</keyword>
<keyword id="KW-1185">Reference proteome</keyword>
<protein>
    <recommendedName>
        <fullName evidence="1">Cyclic pyranopterin monophosphate synthase</fullName>
        <ecNumber evidence="1">4.6.1.17</ecNumber>
    </recommendedName>
    <alternativeName>
        <fullName evidence="1">Molybdenum cofactor biosynthesis protein C</fullName>
    </alternativeName>
</protein>